<comment type="similarity">
    <text evidence="2">Belongs to the PRR23 family.</text>
</comment>
<proteinExistence type="evidence at transcript level"/>
<feature type="chain" id="PRO_0000332250" description="Proline-rich protein 23C">
    <location>
        <begin position="1"/>
        <end position="262"/>
    </location>
</feature>
<feature type="region of interest" description="Disordered" evidence="1">
    <location>
        <begin position="1"/>
        <end position="52"/>
    </location>
</feature>
<feature type="region of interest" description="Disordered" evidence="1">
    <location>
        <begin position="225"/>
        <end position="262"/>
    </location>
</feature>
<feature type="compositionally biased region" description="Pro residues" evidence="1">
    <location>
        <begin position="226"/>
        <end position="242"/>
    </location>
</feature>
<feature type="compositionally biased region" description="Basic and acidic residues" evidence="1">
    <location>
        <begin position="243"/>
        <end position="252"/>
    </location>
</feature>
<feature type="compositionally biased region" description="Basic residues" evidence="1">
    <location>
        <begin position="253"/>
        <end position="262"/>
    </location>
</feature>
<protein>
    <recommendedName>
        <fullName>Proline-rich protein 23C</fullName>
    </recommendedName>
</protein>
<evidence type="ECO:0000256" key="1">
    <source>
        <dbReference type="SAM" id="MobiDB-lite"/>
    </source>
</evidence>
<evidence type="ECO:0000305" key="2"/>
<accession>Q6ZRP0</accession>
<organism>
    <name type="scientific">Homo sapiens</name>
    <name type="common">Human</name>
    <dbReference type="NCBI Taxonomy" id="9606"/>
    <lineage>
        <taxon>Eukaryota</taxon>
        <taxon>Metazoa</taxon>
        <taxon>Chordata</taxon>
        <taxon>Craniata</taxon>
        <taxon>Vertebrata</taxon>
        <taxon>Euteleostomi</taxon>
        <taxon>Mammalia</taxon>
        <taxon>Eutheria</taxon>
        <taxon>Euarchontoglires</taxon>
        <taxon>Primates</taxon>
        <taxon>Haplorrhini</taxon>
        <taxon>Catarrhini</taxon>
        <taxon>Hominidae</taxon>
        <taxon>Homo</taxon>
    </lineage>
</organism>
<keyword id="KW-1185">Reference proteome</keyword>
<name>PR23C_HUMAN</name>
<gene>
    <name type="primary">PRR23C</name>
</gene>
<reference key="1">
    <citation type="journal article" date="2004" name="Nat. Genet.">
        <title>Complete sequencing and characterization of 21,243 full-length human cDNAs.</title>
        <authorList>
            <person name="Ota T."/>
            <person name="Suzuki Y."/>
            <person name="Nishikawa T."/>
            <person name="Otsuki T."/>
            <person name="Sugiyama T."/>
            <person name="Irie R."/>
            <person name="Wakamatsu A."/>
            <person name="Hayashi K."/>
            <person name="Sato H."/>
            <person name="Nagai K."/>
            <person name="Kimura K."/>
            <person name="Makita H."/>
            <person name="Sekine M."/>
            <person name="Obayashi M."/>
            <person name="Nishi T."/>
            <person name="Shibahara T."/>
            <person name="Tanaka T."/>
            <person name="Ishii S."/>
            <person name="Yamamoto J."/>
            <person name="Saito K."/>
            <person name="Kawai Y."/>
            <person name="Isono Y."/>
            <person name="Nakamura Y."/>
            <person name="Nagahari K."/>
            <person name="Murakami K."/>
            <person name="Yasuda T."/>
            <person name="Iwayanagi T."/>
            <person name="Wagatsuma M."/>
            <person name="Shiratori A."/>
            <person name="Sudo H."/>
            <person name="Hosoiri T."/>
            <person name="Kaku Y."/>
            <person name="Kodaira H."/>
            <person name="Kondo H."/>
            <person name="Sugawara M."/>
            <person name="Takahashi M."/>
            <person name="Kanda K."/>
            <person name="Yokoi T."/>
            <person name="Furuya T."/>
            <person name="Kikkawa E."/>
            <person name="Omura Y."/>
            <person name="Abe K."/>
            <person name="Kamihara K."/>
            <person name="Katsuta N."/>
            <person name="Sato K."/>
            <person name="Tanikawa M."/>
            <person name="Yamazaki M."/>
            <person name="Ninomiya K."/>
            <person name="Ishibashi T."/>
            <person name="Yamashita H."/>
            <person name="Murakawa K."/>
            <person name="Fujimori K."/>
            <person name="Tanai H."/>
            <person name="Kimata M."/>
            <person name="Watanabe M."/>
            <person name="Hiraoka S."/>
            <person name="Chiba Y."/>
            <person name="Ishida S."/>
            <person name="Ono Y."/>
            <person name="Takiguchi S."/>
            <person name="Watanabe S."/>
            <person name="Yosida M."/>
            <person name="Hotuta T."/>
            <person name="Kusano J."/>
            <person name="Kanehori K."/>
            <person name="Takahashi-Fujii A."/>
            <person name="Hara H."/>
            <person name="Tanase T.-O."/>
            <person name="Nomura Y."/>
            <person name="Togiya S."/>
            <person name="Komai F."/>
            <person name="Hara R."/>
            <person name="Takeuchi K."/>
            <person name="Arita M."/>
            <person name="Imose N."/>
            <person name="Musashino K."/>
            <person name="Yuuki H."/>
            <person name="Oshima A."/>
            <person name="Sasaki N."/>
            <person name="Aotsuka S."/>
            <person name="Yoshikawa Y."/>
            <person name="Matsunawa H."/>
            <person name="Ichihara T."/>
            <person name="Shiohata N."/>
            <person name="Sano S."/>
            <person name="Moriya S."/>
            <person name="Momiyama H."/>
            <person name="Satoh N."/>
            <person name="Takami S."/>
            <person name="Terashima Y."/>
            <person name="Suzuki O."/>
            <person name="Nakagawa S."/>
            <person name="Senoh A."/>
            <person name="Mizoguchi H."/>
            <person name="Goto Y."/>
            <person name="Shimizu F."/>
            <person name="Wakebe H."/>
            <person name="Hishigaki H."/>
            <person name="Watanabe T."/>
            <person name="Sugiyama A."/>
            <person name="Takemoto M."/>
            <person name="Kawakami B."/>
            <person name="Yamazaki M."/>
            <person name="Watanabe K."/>
            <person name="Kumagai A."/>
            <person name="Itakura S."/>
            <person name="Fukuzumi Y."/>
            <person name="Fujimori Y."/>
            <person name="Komiyama M."/>
            <person name="Tashiro H."/>
            <person name="Tanigami A."/>
            <person name="Fujiwara T."/>
            <person name="Ono T."/>
            <person name="Yamada K."/>
            <person name="Fujii Y."/>
            <person name="Ozaki K."/>
            <person name="Hirao M."/>
            <person name="Ohmori Y."/>
            <person name="Kawabata A."/>
            <person name="Hikiji T."/>
            <person name="Kobatake N."/>
            <person name="Inagaki H."/>
            <person name="Ikema Y."/>
            <person name="Okamoto S."/>
            <person name="Okitani R."/>
            <person name="Kawakami T."/>
            <person name="Noguchi S."/>
            <person name="Itoh T."/>
            <person name="Shigeta K."/>
            <person name="Senba T."/>
            <person name="Matsumura K."/>
            <person name="Nakajima Y."/>
            <person name="Mizuno T."/>
            <person name="Morinaga M."/>
            <person name="Sasaki M."/>
            <person name="Togashi T."/>
            <person name="Oyama M."/>
            <person name="Hata H."/>
            <person name="Watanabe M."/>
            <person name="Komatsu T."/>
            <person name="Mizushima-Sugano J."/>
            <person name="Satoh T."/>
            <person name="Shirai Y."/>
            <person name="Takahashi Y."/>
            <person name="Nakagawa K."/>
            <person name="Okumura K."/>
            <person name="Nagase T."/>
            <person name="Nomura N."/>
            <person name="Kikuchi H."/>
            <person name="Masuho Y."/>
            <person name="Yamashita R."/>
            <person name="Nakai K."/>
            <person name="Yada T."/>
            <person name="Nakamura Y."/>
            <person name="Ohara O."/>
            <person name="Isogai T."/>
            <person name="Sugano S."/>
        </authorList>
    </citation>
    <scope>NUCLEOTIDE SEQUENCE [LARGE SCALE MRNA]</scope>
    <source>
        <tissue>Testis</tissue>
    </source>
</reference>
<dbReference type="EMBL" id="AK128089">
    <property type="protein sequence ID" value="BAC87269.1"/>
    <property type="molecule type" value="mRNA"/>
</dbReference>
<dbReference type="CCDS" id="CCDS46924.1"/>
<dbReference type="RefSeq" id="NP_001128129.1">
    <property type="nucleotide sequence ID" value="NM_001134657.1"/>
</dbReference>
<dbReference type="STRING" id="9606.ENSP00000396648"/>
<dbReference type="BioMuta" id="PRR23C"/>
<dbReference type="DMDM" id="74711211"/>
<dbReference type="PaxDb" id="9606-ENSP00000396648"/>
<dbReference type="Antibodypedia" id="81550">
    <property type="antibodies" value="1 antibodies from 1 providers"/>
</dbReference>
<dbReference type="DNASU" id="389152"/>
<dbReference type="Ensembl" id="ENST00000413199.1">
    <property type="protein sequence ID" value="ENSP00000396648.1"/>
    <property type="gene ID" value="ENSG00000233701.3"/>
</dbReference>
<dbReference type="GeneID" id="389152"/>
<dbReference type="KEGG" id="hsa:389152"/>
<dbReference type="MANE-Select" id="ENST00000413199.1">
    <property type="protein sequence ID" value="ENSP00000396648.1"/>
    <property type="RefSeq nucleotide sequence ID" value="NM_001134657.1"/>
    <property type="RefSeq protein sequence ID" value="NP_001128129.1"/>
</dbReference>
<dbReference type="UCSC" id="uc011bmt.1">
    <property type="organism name" value="human"/>
</dbReference>
<dbReference type="AGR" id="HGNC:37173"/>
<dbReference type="CTD" id="389152"/>
<dbReference type="GeneCards" id="PRR23C"/>
<dbReference type="HGNC" id="HGNC:37173">
    <property type="gene designation" value="PRR23C"/>
</dbReference>
<dbReference type="HPA" id="ENSG00000233701">
    <property type="expression patterns" value="Not detected"/>
</dbReference>
<dbReference type="neXtProt" id="NX_Q6ZRP0"/>
<dbReference type="OpenTargets" id="ENSG00000233701"/>
<dbReference type="PharmGKB" id="PA165698175"/>
<dbReference type="VEuPathDB" id="HostDB:ENSG00000233701"/>
<dbReference type="eggNOG" id="ENOG502RU0G">
    <property type="taxonomic scope" value="Eukaryota"/>
</dbReference>
<dbReference type="GeneTree" id="ENSGT00390000007772"/>
<dbReference type="HOGENOM" id="CLU_090685_0_0_1"/>
<dbReference type="InParanoid" id="Q6ZRP0"/>
<dbReference type="OMA" id="ACLAPWW"/>
<dbReference type="OrthoDB" id="9717112at2759"/>
<dbReference type="PAN-GO" id="Q6ZRP0">
    <property type="GO annotations" value="0 GO annotations based on evolutionary models"/>
</dbReference>
<dbReference type="PhylomeDB" id="Q6ZRP0"/>
<dbReference type="TreeFam" id="TF338612"/>
<dbReference type="PathwayCommons" id="Q6ZRP0"/>
<dbReference type="SignaLink" id="Q6ZRP0"/>
<dbReference type="BioGRID-ORCS" id="389152">
    <property type="hits" value="6 hits in 1062 CRISPR screens"/>
</dbReference>
<dbReference type="GenomeRNAi" id="389152"/>
<dbReference type="Pharos" id="Q6ZRP0">
    <property type="development level" value="Tdark"/>
</dbReference>
<dbReference type="PRO" id="PR:Q6ZRP0"/>
<dbReference type="Proteomes" id="UP000005640">
    <property type="component" value="Chromosome 3"/>
</dbReference>
<dbReference type="RNAct" id="Q6ZRP0">
    <property type="molecule type" value="protein"/>
</dbReference>
<dbReference type="Bgee" id="ENSG00000233701">
    <property type="expression patterns" value="Expressed in primordial germ cell in gonad and 4 other cell types or tissues"/>
</dbReference>
<dbReference type="InterPro" id="IPR018903">
    <property type="entry name" value="PRR23"/>
</dbReference>
<dbReference type="PANTHER" id="PTHR31813">
    <property type="entry name" value="PROLINE-RICH PROTEIN 23B"/>
    <property type="match status" value="1"/>
</dbReference>
<dbReference type="PANTHER" id="PTHR31813:SF6">
    <property type="entry name" value="PROLINE-RICH PROTEIN 23C"/>
    <property type="match status" value="1"/>
</dbReference>
<dbReference type="Pfam" id="PF10630">
    <property type="entry name" value="DUF2476"/>
    <property type="match status" value="1"/>
</dbReference>
<sequence length="262" mass="27805">MGSRPCSPSACLAPWWGQQPGGPGPAKRSRLEEPAGPESRAAPSPEDPAGTPAVDALTSMVVLDAGCALRVPLEDVDLVLELAPMSVLRVSLGGHTLIVIPEVLLSSVDECSGAQGDWSAGLEVDVFLGAHGEDVVVEQEVCASVPEIAAEEEAYEEDADSEFPELWMDSAAGSAAGLYPSARSMFSPYREGPIRGPCALAPNPSSERRSPRPIFDLEFHLLEPVPSSPLQPLPPSPSPGPHARPELPERPPCKVRRRLFQE</sequence>